<dbReference type="EC" id="4.2.1.33" evidence="1"/>
<dbReference type="EMBL" id="CP000941">
    <property type="protein sequence ID" value="ACA12455.1"/>
    <property type="molecule type" value="Genomic_DNA"/>
</dbReference>
<dbReference type="RefSeq" id="WP_004085787.1">
    <property type="nucleotide sequence ID" value="NC_010513.1"/>
</dbReference>
<dbReference type="SMR" id="B0U3M6"/>
<dbReference type="KEGG" id="xfm:Xfasm12_1542"/>
<dbReference type="HOGENOM" id="CLU_006714_3_4_6"/>
<dbReference type="UniPathway" id="UPA00048">
    <property type="reaction ID" value="UER00071"/>
</dbReference>
<dbReference type="GO" id="GO:0003861">
    <property type="term" value="F:3-isopropylmalate dehydratase activity"/>
    <property type="evidence" value="ECO:0007669"/>
    <property type="project" value="UniProtKB-UniRule"/>
</dbReference>
<dbReference type="GO" id="GO:0051539">
    <property type="term" value="F:4 iron, 4 sulfur cluster binding"/>
    <property type="evidence" value="ECO:0007669"/>
    <property type="project" value="UniProtKB-KW"/>
</dbReference>
<dbReference type="GO" id="GO:0046872">
    <property type="term" value="F:metal ion binding"/>
    <property type="evidence" value="ECO:0007669"/>
    <property type="project" value="UniProtKB-KW"/>
</dbReference>
<dbReference type="GO" id="GO:0009098">
    <property type="term" value="P:L-leucine biosynthetic process"/>
    <property type="evidence" value="ECO:0007669"/>
    <property type="project" value="UniProtKB-UniRule"/>
</dbReference>
<dbReference type="CDD" id="cd01583">
    <property type="entry name" value="IPMI"/>
    <property type="match status" value="1"/>
</dbReference>
<dbReference type="FunFam" id="3.30.499.10:FF:000007">
    <property type="entry name" value="3-isopropylmalate dehydratase large subunit"/>
    <property type="match status" value="1"/>
</dbReference>
<dbReference type="Gene3D" id="3.30.499.10">
    <property type="entry name" value="Aconitase, domain 3"/>
    <property type="match status" value="2"/>
</dbReference>
<dbReference type="HAMAP" id="MF_01026">
    <property type="entry name" value="LeuC_type1"/>
    <property type="match status" value="1"/>
</dbReference>
<dbReference type="InterPro" id="IPR004430">
    <property type="entry name" value="3-IsopropMal_deHydase_lsu"/>
</dbReference>
<dbReference type="InterPro" id="IPR015931">
    <property type="entry name" value="Acnase/IPM_dHydase_lsu_aba_1/3"/>
</dbReference>
<dbReference type="InterPro" id="IPR001030">
    <property type="entry name" value="Acoase/IPM_deHydtase_lsu_aba"/>
</dbReference>
<dbReference type="InterPro" id="IPR018136">
    <property type="entry name" value="Aconitase_4Fe-4S_BS"/>
</dbReference>
<dbReference type="InterPro" id="IPR036008">
    <property type="entry name" value="Aconitase_4Fe-4S_dom"/>
</dbReference>
<dbReference type="InterPro" id="IPR050067">
    <property type="entry name" value="IPM_dehydratase_rel_enz"/>
</dbReference>
<dbReference type="InterPro" id="IPR033941">
    <property type="entry name" value="IPMI_cat"/>
</dbReference>
<dbReference type="NCBIfam" id="TIGR00170">
    <property type="entry name" value="leuC"/>
    <property type="match status" value="1"/>
</dbReference>
<dbReference type="NCBIfam" id="NF004016">
    <property type="entry name" value="PRK05478.1"/>
    <property type="match status" value="1"/>
</dbReference>
<dbReference type="NCBIfam" id="NF009116">
    <property type="entry name" value="PRK12466.1"/>
    <property type="match status" value="1"/>
</dbReference>
<dbReference type="PANTHER" id="PTHR43822:SF9">
    <property type="entry name" value="3-ISOPROPYLMALATE DEHYDRATASE"/>
    <property type="match status" value="1"/>
</dbReference>
<dbReference type="PANTHER" id="PTHR43822">
    <property type="entry name" value="HOMOACONITASE, MITOCHONDRIAL-RELATED"/>
    <property type="match status" value="1"/>
</dbReference>
<dbReference type="Pfam" id="PF00330">
    <property type="entry name" value="Aconitase"/>
    <property type="match status" value="1"/>
</dbReference>
<dbReference type="PRINTS" id="PR00415">
    <property type="entry name" value="ACONITASE"/>
</dbReference>
<dbReference type="SUPFAM" id="SSF53732">
    <property type="entry name" value="Aconitase iron-sulfur domain"/>
    <property type="match status" value="1"/>
</dbReference>
<dbReference type="PROSITE" id="PS00450">
    <property type="entry name" value="ACONITASE_1"/>
    <property type="match status" value="1"/>
</dbReference>
<dbReference type="PROSITE" id="PS01244">
    <property type="entry name" value="ACONITASE_2"/>
    <property type="match status" value="1"/>
</dbReference>
<comment type="function">
    <text evidence="1">Catalyzes the isomerization between 2-isopropylmalate and 3-isopropylmalate, via the formation of 2-isopropylmaleate.</text>
</comment>
<comment type="catalytic activity">
    <reaction evidence="1">
        <text>(2R,3S)-3-isopropylmalate = (2S)-2-isopropylmalate</text>
        <dbReference type="Rhea" id="RHEA:32287"/>
        <dbReference type="ChEBI" id="CHEBI:1178"/>
        <dbReference type="ChEBI" id="CHEBI:35121"/>
        <dbReference type="EC" id="4.2.1.33"/>
    </reaction>
</comment>
<comment type="cofactor">
    <cofactor evidence="1">
        <name>[4Fe-4S] cluster</name>
        <dbReference type="ChEBI" id="CHEBI:49883"/>
    </cofactor>
    <text evidence="1">Binds 1 [4Fe-4S] cluster per subunit.</text>
</comment>
<comment type="pathway">
    <text evidence="1">Amino-acid biosynthesis; L-leucine biosynthesis; L-leucine from 3-methyl-2-oxobutanoate: step 2/4.</text>
</comment>
<comment type="subunit">
    <text evidence="1">Heterodimer of LeuC and LeuD.</text>
</comment>
<comment type="similarity">
    <text evidence="1">Belongs to the aconitase/IPM isomerase family. LeuC type 1 subfamily.</text>
</comment>
<reference key="1">
    <citation type="journal article" date="2010" name="J. Bacteriol.">
        <title>Whole genome sequences of two Xylella fastidiosa strains (M12 and M23) causing almond leaf scorch disease in California.</title>
        <authorList>
            <person name="Chen J."/>
            <person name="Xie G."/>
            <person name="Han S."/>
            <person name="Chertkov O."/>
            <person name="Sims D."/>
            <person name="Civerolo E.L."/>
        </authorList>
    </citation>
    <scope>NUCLEOTIDE SEQUENCE [LARGE SCALE GENOMIC DNA]</scope>
    <source>
        <strain>M12</strain>
    </source>
</reference>
<feature type="chain" id="PRO_1000135722" description="3-isopropylmalate dehydratase large subunit">
    <location>
        <begin position="1"/>
        <end position="474"/>
    </location>
</feature>
<feature type="binding site" evidence="1">
    <location>
        <position position="353"/>
    </location>
    <ligand>
        <name>[4Fe-4S] cluster</name>
        <dbReference type="ChEBI" id="CHEBI:49883"/>
    </ligand>
</feature>
<feature type="binding site" evidence="1">
    <location>
        <position position="414"/>
    </location>
    <ligand>
        <name>[4Fe-4S] cluster</name>
        <dbReference type="ChEBI" id="CHEBI:49883"/>
    </ligand>
</feature>
<feature type="binding site" evidence="1">
    <location>
        <position position="417"/>
    </location>
    <ligand>
        <name>[4Fe-4S] cluster</name>
        <dbReference type="ChEBI" id="CHEBI:49883"/>
    </ligand>
</feature>
<evidence type="ECO:0000255" key="1">
    <source>
        <dbReference type="HAMAP-Rule" id="MF_01026"/>
    </source>
</evidence>
<proteinExistence type="inferred from homology"/>
<sequence length="474" mass="51143">MAGKTLYGKLWDIHEVARRDDGSSLIYIDRHILHEVTSPQAFEGLRLAGRPLWRVNANIATPDHNVPTTKAERQGSLLSIADTVSRLQVQTLDENCDDFGIFEFKMNDVRQGIVHVIGPEQGATLPGMTVVCGDSHTSTHGAFGALAHGIGTSEVEHVLATQCLVTQKMKNMQVRVEGTLSWGVTAKDIVLALIGKIGTAGGNGYAVEFSGSTIRALSMEGRMTICNMAIEAGARVGMVAVDEKTIQYVHGRPFAPKGSDWDAAVAFWRGLVSDPDAHFDRVVELSAEEIKPQVTWGTSPEMVSAVDQSVPDPERETDPVKKESLIRALKYMGLQPNDPITSIKLDRVFIGSCTNSRIEDLRAAAEVVKGRKVASTVKQAMVVPGSGLVKAQAEVEGLDKIFIEAGFEWREPGCSMCLAMNPDKLGSGEHCASTSNRNFEGRQGIGGRTHLVSPAMAAAAAVAGHFVDVREMMR</sequence>
<gene>
    <name evidence="1" type="primary">leuC</name>
    <name type="ordered locus">Xfasm12_1542</name>
</gene>
<organism>
    <name type="scientific">Xylella fastidiosa (strain M12)</name>
    <dbReference type="NCBI Taxonomy" id="405440"/>
    <lineage>
        <taxon>Bacteria</taxon>
        <taxon>Pseudomonadati</taxon>
        <taxon>Pseudomonadota</taxon>
        <taxon>Gammaproteobacteria</taxon>
        <taxon>Lysobacterales</taxon>
        <taxon>Lysobacteraceae</taxon>
        <taxon>Xylella</taxon>
    </lineage>
</organism>
<protein>
    <recommendedName>
        <fullName evidence="1">3-isopropylmalate dehydratase large subunit</fullName>
        <ecNumber evidence="1">4.2.1.33</ecNumber>
    </recommendedName>
    <alternativeName>
        <fullName evidence="1">Alpha-IPM isomerase</fullName>
        <shortName evidence="1">IPMI</shortName>
    </alternativeName>
    <alternativeName>
        <fullName evidence="1">Isopropylmalate isomerase</fullName>
    </alternativeName>
</protein>
<accession>B0U3M6</accession>
<name>LEUC_XYLFM</name>
<keyword id="KW-0004">4Fe-4S</keyword>
<keyword id="KW-0028">Amino-acid biosynthesis</keyword>
<keyword id="KW-0100">Branched-chain amino acid biosynthesis</keyword>
<keyword id="KW-0408">Iron</keyword>
<keyword id="KW-0411">Iron-sulfur</keyword>
<keyword id="KW-0432">Leucine biosynthesis</keyword>
<keyword id="KW-0456">Lyase</keyword>
<keyword id="KW-0479">Metal-binding</keyword>